<sequence length="299" mass="34245">MQLHKPVLLKDVIENLEINPEGIYVDLTLGYAGHSSEILKKLSSKGKLIGFDQDSFAIEKSRQRLSQISDNFVLINDNFVNFKVYLDKMNISFVDGFLLDLGVSSVQLDFAHRGFSYSKLGPLDMRMNLDQPLKADDIVNGYDQESLCKIFIENADVKLAKQVAKGIVNNRPIKDTLELVEVIRSSLPAALVRKKNPAKAVFQAIRIAVNDELIVLKKFLAQSLDFLKKDSKMLIITFHSIEDRIVKDFFKRQVKNKHDRRLPIMEQKDYQVKTIKPTEEEIAQNRRAKSSKLRIIKKL</sequence>
<accession>Q98Q75</accession>
<organism>
    <name type="scientific">Mycoplasmopsis pulmonis (strain UAB CTIP)</name>
    <name type="common">Mycoplasma pulmonis</name>
    <dbReference type="NCBI Taxonomy" id="272635"/>
    <lineage>
        <taxon>Bacteria</taxon>
        <taxon>Bacillati</taxon>
        <taxon>Mycoplasmatota</taxon>
        <taxon>Mycoplasmoidales</taxon>
        <taxon>Metamycoplasmataceae</taxon>
        <taxon>Mycoplasmopsis</taxon>
    </lineage>
</organism>
<dbReference type="EC" id="2.1.1.199" evidence="1"/>
<dbReference type="EMBL" id="AL445564">
    <property type="protein sequence ID" value="CAC13666.1"/>
    <property type="molecule type" value="Genomic_DNA"/>
</dbReference>
<dbReference type="PIR" id="E90573">
    <property type="entry name" value="E90573"/>
</dbReference>
<dbReference type="RefSeq" id="WP_010925294.1">
    <property type="nucleotide sequence ID" value="NC_002771.1"/>
</dbReference>
<dbReference type="SMR" id="Q98Q75"/>
<dbReference type="STRING" id="272635.gene:17577094"/>
<dbReference type="KEGG" id="mpu:MYPU_4930"/>
<dbReference type="eggNOG" id="COG0275">
    <property type="taxonomic scope" value="Bacteria"/>
</dbReference>
<dbReference type="HOGENOM" id="CLU_038422_3_0_14"/>
<dbReference type="BioCyc" id="MPUL272635:G1GT6-497-MONOMER"/>
<dbReference type="Proteomes" id="UP000000528">
    <property type="component" value="Chromosome"/>
</dbReference>
<dbReference type="GO" id="GO:0005737">
    <property type="term" value="C:cytoplasm"/>
    <property type="evidence" value="ECO:0007669"/>
    <property type="project" value="UniProtKB-SubCell"/>
</dbReference>
<dbReference type="GO" id="GO:0071424">
    <property type="term" value="F:rRNA (cytosine-N4-)-methyltransferase activity"/>
    <property type="evidence" value="ECO:0007669"/>
    <property type="project" value="UniProtKB-UniRule"/>
</dbReference>
<dbReference type="GO" id="GO:0070475">
    <property type="term" value="P:rRNA base methylation"/>
    <property type="evidence" value="ECO:0007669"/>
    <property type="project" value="UniProtKB-UniRule"/>
</dbReference>
<dbReference type="Gene3D" id="1.10.150.170">
    <property type="entry name" value="Putative methyltransferase TM0872, insert domain"/>
    <property type="match status" value="1"/>
</dbReference>
<dbReference type="Gene3D" id="3.40.50.150">
    <property type="entry name" value="Vaccinia Virus protein VP39"/>
    <property type="match status" value="1"/>
</dbReference>
<dbReference type="HAMAP" id="MF_01007">
    <property type="entry name" value="16SrRNA_methyltr_H"/>
    <property type="match status" value="1"/>
</dbReference>
<dbReference type="InterPro" id="IPR002903">
    <property type="entry name" value="RsmH"/>
</dbReference>
<dbReference type="InterPro" id="IPR023397">
    <property type="entry name" value="SAM-dep_MeTrfase_MraW_recog"/>
</dbReference>
<dbReference type="InterPro" id="IPR029063">
    <property type="entry name" value="SAM-dependent_MTases_sf"/>
</dbReference>
<dbReference type="NCBIfam" id="TIGR00006">
    <property type="entry name" value="16S rRNA (cytosine(1402)-N(4))-methyltransferase RsmH"/>
    <property type="match status" value="1"/>
</dbReference>
<dbReference type="PANTHER" id="PTHR11265:SF0">
    <property type="entry name" value="12S RRNA N4-METHYLCYTIDINE METHYLTRANSFERASE"/>
    <property type="match status" value="1"/>
</dbReference>
<dbReference type="PANTHER" id="PTHR11265">
    <property type="entry name" value="S-ADENOSYL-METHYLTRANSFERASE MRAW"/>
    <property type="match status" value="1"/>
</dbReference>
<dbReference type="Pfam" id="PF01795">
    <property type="entry name" value="Methyltransf_5"/>
    <property type="match status" value="1"/>
</dbReference>
<dbReference type="PIRSF" id="PIRSF004486">
    <property type="entry name" value="MraW"/>
    <property type="match status" value="1"/>
</dbReference>
<dbReference type="SUPFAM" id="SSF81799">
    <property type="entry name" value="Putative methyltransferase TM0872, insert domain"/>
    <property type="match status" value="1"/>
</dbReference>
<dbReference type="SUPFAM" id="SSF53335">
    <property type="entry name" value="S-adenosyl-L-methionine-dependent methyltransferases"/>
    <property type="match status" value="1"/>
</dbReference>
<keyword id="KW-0963">Cytoplasm</keyword>
<keyword id="KW-0489">Methyltransferase</keyword>
<keyword id="KW-1185">Reference proteome</keyword>
<keyword id="KW-0698">rRNA processing</keyword>
<keyword id="KW-0949">S-adenosyl-L-methionine</keyword>
<keyword id="KW-0808">Transferase</keyword>
<gene>
    <name evidence="1" type="primary">rsmH</name>
    <name type="synonym">mraW</name>
    <name type="ordered locus">MYPU_4930</name>
</gene>
<protein>
    <recommendedName>
        <fullName evidence="1">Ribosomal RNA small subunit methyltransferase H</fullName>
        <ecNumber evidence="1">2.1.1.199</ecNumber>
    </recommendedName>
    <alternativeName>
        <fullName evidence="1">16S rRNA m(4)C1402 methyltransferase</fullName>
    </alternativeName>
    <alternativeName>
        <fullName evidence="1">rRNA (cytosine-N(4)-)-methyltransferase RsmH</fullName>
    </alternativeName>
</protein>
<proteinExistence type="inferred from homology"/>
<evidence type="ECO:0000255" key="1">
    <source>
        <dbReference type="HAMAP-Rule" id="MF_01007"/>
    </source>
</evidence>
<comment type="function">
    <text evidence="1">Specifically methylates the N4 position of cytidine in position 1402 (C1402) of 16S rRNA.</text>
</comment>
<comment type="catalytic activity">
    <reaction evidence="1">
        <text>cytidine(1402) in 16S rRNA + S-adenosyl-L-methionine = N(4)-methylcytidine(1402) in 16S rRNA + S-adenosyl-L-homocysteine + H(+)</text>
        <dbReference type="Rhea" id="RHEA:42928"/>
        <dbReference type="Rhea" id="RHEA-COMP:10286"/>
        <dbReference type="Rhea" id="RHEA-COMP:10287"/>
        <dbReference type="ChEBI" id="CHEBI:15378"/>
        <dbReference type="ChEBI" id="CHEBI:57856"/>
        <dbReference type="ChEBI" id="CHEBI:59789"/>
        <dbReference type="ChEBI" id="CHEBI:74506"/>
        <dbReference type="ChEBI" id="CHEBI:82748"/>
        <dbReference type="EC" id="2.1.1.199"/>
    </reaction>
</comment>
<comment type="subcellular location">
    <subcellularLocation>
        <location evidence="1">Cytoplasm</location>
    </subcellularLocation>
</comment>
<comment type="similarity">
    <text evidence="1">Belongs to the methyltransferase superfamily. RsmH family.</text>
</comment>
<feature type="chain" id="PRO_0000108666" description="Ribosomal RNA small subunit methyltransferase H">
    <location>
        <begin position="1"/>
        <end position="299"/>
    </location>
</feature>
<feature type="binding site" evidence="1">
    <location>
        <begin position="32"/>
        <end position="34"/>
    </location>
    <ligand>
        <name>S-adenosyl-L-methionine</name>
        <dbReference type="ChEBI" id="CHEBI:59789"/>
    </ligand>
</feature>
<feature type="binding site" evidence="1">
    <location>
        <position position="52"/>
    </location>
    <ligand>
        <name>S-adenosyl-L-methionine</name>
        <dbReference type="ChEBI" id="CHEBI:59789"/>
    </ligand>
</feature>
<feature type="binding site" evidence="1">
    <location>
        <position position="79"/>
    </location>
    <ligand>
        <name>S-adenosyl-L-methionine</name>
        <dbReference type="ChEBI" id="CHEBI:59789"/>
    </ligand>
</feature>
<feature type="binding site" evidence="1">
    <location>
        <position position="100"/>
    </location>
    <ligand>
        <name>S-adenosyl-L-methionine</name>
        <dbReference type="ChEBI" id="CHEBI:59789"/>
    </ligand>
</feature>
<feature type="binding site" evidence="1">
    <location>
        <position position="107"/>
    </location>
    <ligand>
        <name>S-adenosyl-L-methionine</name>
        <dbReference type="ChEBI" id="CHEBI:59789"/>
    </ligand>
</feature>
<reference key="1">
    <citation type="journal article" date="2001" name="Nucleic Acids Res.">
        <title>The complete genome sequence of the murine respiratory pathogen Mycoplasma pulmonis.</title>
        <authorList>
            <person name="Chambaud I."/>
            <person name="Heilig R."/>
            <person name="Ferris S."/>
            <person name="Barbe V."/>
            <person name="Samson D."/>
            <person name="Galisson F."/>
            <person name="Moszer I."/>
            <person name="Dybvig K."/>
            <person name="Wroblewski H."/>
            <person name="Viari A."/>
            <person name="Rocha E.P.C."/>
            <person name="Blanchard A."/>
        </authorList>
    </citation>
    <scope>NUCLEOTIDE SEQUENCE [LARGE SCALE GENOMIC DNA]</scope>
    <source>
        <strain>UAB CTIP</strain>
    </source>
</reference>
<name>RSMH_MYCPU</name>